<name>PPS1_YEAST</name>
<protein>
    <recommendedName>
        <fullName>Dual specificity protein phosphatase PPS1</fullName>
        <ecNumber>3.1.3.16</ecNumber>
        <ecNumber>3.1.3.48</ecNumber>
    </recommendedName>
</protein>
<sequence>MVLEVPSITPGELHDLMRLHQDAEWPECKKMFPWAHDISFGQPPDFPHSLAIVKSQSDANNSALLRNSLEVNDIFQSWKVRTSFHREGDTCETGNDSNGFQYPNNTKELLNLLKFQIRQLELQVDDVALENAATYCHNHSILPFLKVDPRGLSLELKRYSRNKVGSNTTLKRSGQDVWGRRGLFRRFDLQCAKMIEMVDNIVIYCSRTGGSTDMQTESAPACSHEGNCPNCTTLALLLQICLMFVQKGYVGSGGSLYKTNLFICTYQNFNTDIPQTLIGTPLLDNEFFKNNTPLNLCSSPSEIVCFNNVDKNMVLCEKLELNKLTSATRLEETGLICGNTTDWHNYQIIKKNNISLTHRFEENTSIVNLKSLNYDTDNPTTSISQLYNIPNTKEVWKLIIKCTSNSQMPSLTKIRTYLDLLLDDDASKSQEHLHLTFPASGSIGLGNLNIQSVEILLNVCYLIFQVSQVQELLTFMYCEDGYTETSLLLTAYIIFHFNIPLQDALLRIHPRPFFLFPSDLQILGHLQPVLREFSPQNGSNLKLYANALKFRDKSFQLHISSELFSSIFFMKIPLESNFVNLKGPLPSRILRHLYLGSLDHAQNPALLKSLGITHIVSVGEVVSWTLNKDKIAHPVRPHRAITMTNTNEVAGNTTCNKSRNRADTVVSDKQENGSNVVISENSGFQICQIENLDDNGKDPLFHQIDKVLDFISNSEATGGKVLVHCMVGVSRSATVCIAECMRYLQCDLASAYLFVRVRRLNVIIQPNLFFVYELFKWWKKHYNREKDKTMDWHIICRGIAEVNMKYT</sequence>
<dbReference type="EC" id="3.1.3.16"/>
<dbReference type="EC" id="3.1.3.48"/>
<dbReference type="EMBL" id="X76053">
    <property type="protein sequence ID" value="CAA53639.1"/>
    <property type="molecule type" value="Genomic_DNA"/>
</dbReference>
<dbReference type="EMBL" id="Z36145">
    <property type="protein sequence ID" value="CAA85239.1"/>
    <property type="molecule type" value="Genomic_DNA"/>
</dbReference>
<dbReference type="EMBL" id="BK006936">
    <property type="protein sequence ID" value="DAA07392.1"/>
    <property type="molecule type" value="Genomic_DNA"/>
</dbReference>
<dbReference type="PIR" id="S44538">
    <property type="entry name" value="S44538"/>
</dbReference>
<dbReference type="RefSeq" id="NP_009835.3">
    <property type="nucleotide sequence ID" value="NM_001178624.3"/>
</dbReference>
<dbReference type="SMR" id="P38148"/>
<dbReference type="BioGRID" id="32971">
    <property type="interactions" value="40"/>
</dbReference>
<dbReference type="DIP" id="DIP-6546N"/>
<dbReference type="FunCoup" id="P38148">
    <property type="interactions" value="19"/>
</dbReference>
<dbReference type="IntAct" id="P38148">
    <property type="interactions" value="4"/>
</dbReference>
<dbReference type="MINT" id="P38148"/>
<dbReference type="STRING" id="4932.YBR276C"/>
<dbReference type="GlyGen" id="P38148">
    <property type="glycosylation" value="1 site"/>
</dbReference>
<dbReference type="iPTMnet" id="P38148"/>
<dbReference type="PaxDb" id="4932-YBR276C"/>
<dbReference type="PeptideAtlas" id="P38148"/>
<dbReference type="EnsemblFungi" id="YBR276C_mRNA">
    <property type="protein sequence ID" value="YBR276C"/>
    <property type="gene ID" value="YBR276C"/>
</dbReference>
<dbReference type="GeneID" id="852579"/>
<dbReference type="KEGG" id="sce:YBR276C"/>
<dbReference type="AGR" id="SGD:S000000480"/>
<dbReference type="SGD" id="S000000480">
    <property type="gene designation" value="PPS1"/>
</dbReference>
<dbReference type="VEuPathDB" id="FungiDB:YBR276C"/>
<dbReference type="eggNOG" id="KOG1716">
    <property type="taxonomic scope" value="Eukaryota"/>
</dbReference>
<dbReference type="HOGENOM" id="CLU_365223_0_0_1"/>
<dbReference type="InParanoid" id="P38148"/>
<dbReference type="OMA" id="TVCIAEC"/>
<dbReference type="OrthoDB" id="273181at2759"/>
<dbReference type="BioCyc" id="YEAST:G3O-29197-MONOMER"/>
<dbReference type="BioGRID-ORCS" id="852579">
    <property type="hits" value="0 hits in 10 CRISPR screens"/>
</dbReference>
<dbReference type="PRO" id="PR:P38148"/>
<dbReference type="Proteomes" id="UP000002311">
    <property type="component" value="Chromosome II"/>
</dbReference>
<dbReference type="RNAct" id="P38148">
    <property type="molecule type" value="protein"/>
</dbReference>
<dbReference type="GO" id="GO:0005634">
    <property type="term" value="C:nucleus"/>
    <property type="evidence" value="ECO:0007669"/>
    <property type="project" value="GOC"/>
</dbReference>
<dbReference type="GO" id="GO:0004722">
    <property type="term" value="F:protein serine/threonine phosphatase activity"/>
    <property type="evidence" value="ECO:0007669"/>
    <property type="project" value="UniProtKB-EC"/>
</dbReference>
<dbReference type="GO" id="GO:0004725">
    <property type="term" value="F:protein tyrosine phosphatase activity"/>
    <property type="evidence" value="ECO:0007669"/>
    <property type="project" value="UniProtKB-EC"/>
</dbReference>
<dbReference type="GO" id="GO:0008138">
    <property type="term" value="F:protein tyrosine/serine/threonine phosphatase activity"/>
    <property type="evidence" value="ECO:0000314"/>
    <property type="project" value="SGD"/>
</dbReference>
<dbReference type="GO" id="GO:0033260">
    <property type="term" value="P:nuclear DNA replication"/>
    <property type="evidence" value="ECO:0000315"/>
    <property type="project" value="SGD"/>
</dbReference>
<dbReference type="CDD" id="cd14516">
    <property type="entry name" value="DSP_fungal_PPS1"/>
    <property type="match status" value="1"/>
</dbReference>
<dbReference type="Gene3D" id="3.90.190.10">
    <property type="entry name" value="Protein tyrosine phosphatase superfamily"/>
    <property type="match status" value="1"/>
</dbReference>
<dbReference type="InterPro" id="IPR000340">
    <property type="entry name" value="Dual-sp_phosphatase_cat-dom"/>
</dbReference>
<dbReference type="InterPro" id="IPR053239">
    <property type="entry name" value="Dual_spec_PTase"/>
</dbReference>
<dbReference type="InterPro" id="IPR047949">
    <property type="entry name" value="PPS1_DSP"/>
</dbReference>
<dbReference type="InterPro" id="IPR029021">
    <property type="entry name" value="Prot-tyrosine_phosphatase-like"/>
</dbReference>
<dbReference type="InterPro" id="IPR016130">
    <property type="entry name" value="Tyr_Pase_AS"/>
</dbReference>
<dbReference type="InterPro" id="IPR000387">
    <property type="entry name" value="Tyr_Pase_dom"/>
</dbReference>
<dbReference type="InterPro" id="IPR020422">
    <property type="entry name" value="TYR_PHOSPHATASE_DUAL_dom"/>
</dbReference>
<dbReference type="PANTHER" id="PTHR47550">
    <property type="entry name" value="DUAL SPECIFICITY PROTEIN PHOSPHATASE PPS1"/>
    <property type="match status" value="1"/>
</dbReference>
<dbReference type="PANTHER" id="PTHR47550:SF1">
    <property type="entry name" value="DUAL SPECIFICITY PROTEIN PHOSPHATASE PPS1"/>
    <property type="match status" value="1"/>
</dbReference>
<dbReference type="Pfam" id="PF00782">
    <property type="entry name" value="DSPc"/>
    <property type="match status" value="1"/>
</dbReference>
<dbReference type="SMART" id="SM00195">
    <property type="entry name" value="DSPc"/>
    <property type="match status" value="1"/>
</dbReference>
<dbReference type="SUPFAM" id="SSF52799">
    <property type="entry name" value="(Phosphotyrosine protein) phosphatases II"/>
    <property type="match status" value="1"/>
</dbReference>
<dbReference type="PROSITE" id="PS00383">
    <property type="entry name" value="TYR_PHOSPHATASE_1"/>
    <property type="match status" value="1"/>
</dbReference>
<dbReference type="PROSITE" id="PS50056">
    <property type="entry name" value="TYR_PHOSPHATASE_2"/>
    <property type="match status" value="1"/>
</dbReference>
<dbReference type="PROSITE" id="PS50054">
    <property type="entry name" value="TYR_PHOSPHATASE_DUAL"/>
    <property type="match status" value="1"/>
</dbReference>
<comment type="function">
    <text evidence="3">Protein phosphatase with specificity for serine, threonine, and tyrosine residues; has a role in the DNA synthesis phase of the cell cycle.</text>
</comment>
<comment type="catalytic activity">
    <reaction evidence="2">
        <text>O-phospho-L-tyrosyl-[protein] + H2O = L-tyrosyl-[protein] + phosphate</text>
        <dbReference type="Rhea" id="RHEA:10684"/>
        <dbReference type="Rhea" id="RHEA-COMP:10136"/>
        <dbReference type="Rhea" id="RHEA-COMP:20101"/>
        <dbReference type="ChEBI" id="CHEBI:15377"/>
        <dbReference type="ChEBI" id="CHEBI:43474"/>
        <dbReference type="ChEBI" id="CHEBI:46858"/>
        <dbReference type="ChEBI" id="CHEBI:61978"/>
        <dbReference type="EC" id="3.1.3.48"/>
    </reaction>
</comment>
<comment type="catalytic activity">
    <reaction>
        <text>O-phospho-L-seryl-[protein] + H2O = L-seryl-[protein] + phosphate</text>
        <dbReference type="Rhea" id="RHEA:20629"/>
        <dbReference type="Rhea" id="RHEA-COMP:9863"/>
        <dbReference type="Rhea" id="RHEA-COMP:11604"/>
        <dbReference type="ChEBI" id="CHEBI:15377"/>
        <dbReference type="ChEBI" id="CHEBI:29999"/>
        <dbReference type="ChEBI" id="CHEBI:43474"/>
        <dbReference type="ChEBI" id="CHEBI:83421"/>
        <dbReference type="EC" id="3.1.3.16"/>
    </reaction>
</comment>
<comment type="catalytic activity">
    <reaction>
        <text>O-phospho-L-threonyl-[protein] + H2O = L-threonyl-[protein] + phosphate</text>
        <dbReference type="Rhea" id="RHEA:47004"/>
        <dbReference type="Rhea" id="RHEA-COMP:11060"/>
        <dbReference type="Rhea" id="RHEA-COMP:11605"/>
        <dbReference type="ChEBI" id="CHEBI:15377"/>
        <dbReference type="ChEBI" id="CHEBI:30013"/>
        <dbReference type="ChEBI" id="CHEBI:43474"/>
        <dbReference type="ChEBI" id="CHEBI:61977"/>
        <dbReference type="EC" id="3.1.3.16"/>
    </reaction>
</comment>
<comment type="similarity">
    <text evidence="4">Belongs to the protein-tyrosine phosphatase family. Non-receptor class dual specificity subfamily.</text>
</comment>
<evidence type="ECO:0000255" key="1">
    <source>
        <dbReference type="PROSITE-ProRule" id="PRU00160"/>
    </source>
</evidence>
<evidence type="ECO:0000255" key="2">
    <source>
        <dbReference type="PROSITE-ProRule" id="PRU10044"/>
    </source>
</evidence>
<evidence type="ECO:0000269" key="3">
    <source>
    </source>
</evidence>
<evidence type="ECO:0000305" key="4"/>
<organism>
    <name type="scientific">Saccharomyces cerevisiae (strain ATCC 204508 / S288c)</name>
    <name type="common">Baker's yeast</name>
    <dbReference type="NCBI Taxonomy" id="559292"/>
    <lineage>
        <taxon>Eukaryota</taxon>
        <taxon>Fungi</taxon>
        <taxon>Dikarya</taxon>
        <taxon>Ascomycota</taxon>
        <taxon>Saccharomycotina</taxon>
        <taxon>Saccharomycetes</taxon>
        <taxon>Saccharomycetales</taxon>
        <taxon>Saccharomycetaceae</taxon>
        <taxon>Saccharomyces</taxon>
    </lineage>
</organism>
<keyword id="KW-0131">Cell cycle</keyword>
<keyword id="KW-0378">Hydrolase</keyword>
<keyword id="KW-0904">Protein phosphatase</keyword>
<keyword id="KW-1185">Reference proteome</keyword>
<feature type="chain" id="PRO_0000094921" description="Dual specificity protein phosphatase PPS1">
    <location>
        <begin position="1"/>
        <end position="807"/>
    </location>
</feature>
<feature type="domain" description="Tyrosine-protein phosphatase" evidence="1">
    <location>
        <begin position="585"/>
        <end position="783"/>
    </location>
</feature>
<feature type="region of interest" description="Catalytic">
    <location>
        <begin position="593"/>
        <end position="807"/>
    </location>
</feature>
<feature type="active site" description="Phosphocysteine intermediate" evidence="1">
    <location>
        <position position="725"/>
    </location>
</feature>
<gene>
    <name type="primary">PPS1</name>
    <name type="ordered locus">YBR276C</name>
    <name type="ORF">YBR2013</name>
</gene>
<reference key="1">
    <citation type="journal article" date="1994" name="Yeast">
        <title>The sequence of a 32,420 bp segment located on the right arm of chromosome II from Saccharomyces cerevisiae.</title>
        <authorList>
            <person name="Holmstroem K."/>
            <person name="Brandt T."/>
            <person name="Kallesoe T."/>
        </authorList>
    </citation>
    <scope>NUCLEOTIDE SEQUENCE [GENOMIC DNA]</scope>
    <source>
        <strain>ATCC 204508 / S288c</strain>
    </source>
</reference>
<reference key="2">
    <citation type="journal article" date="1994" name="EMBO J.">
        <title>Complete DNA sequence of yeast chromosome II.</title>
        <authorList>
            <person name="Feldmann H."/>
            <person name="Aigle M."/>
            <person name="Aljinovic G."/>
            <person name="Andre B."/>
            <person name="Baclet M.C."/>
            <person name="Barthe C."/>
            <person name="Baur A."/>
            <person name="Becam A.-M."/>
            <person name="Biteau N."/>
            <person name="Boles E."/>
            <person name="Brandt T."/>
            <person name="Brendel M."/>
            <person name="Brueckner M."/>
            <person name="Bussereau F."/>
            <person name="Christiansen C."/>
            <person name="Contreras R."/>
            <person name="Crouzet M."/>
            <person name="Cziepluch C."/>
            <person name="Demolis N."/>
            <person name="Delaveau T."/>
            <person name="Doignon F."/>
            <person name="Domdey H."/>
            <person name="Duesterhus S."/>
            <person name="Dubois E."/>
            <person name="Dujon B."/>
            <person name="El Bakkoury M."/>
            <person name="Entian K.-D."/>
            <person name="Feuermann M."/>
            <person name="Fiers W."/>
            <person name="Fobo G.M."/>
            <person name="Fritz C."/>
            <person name="Gassenhuber J."/>
            <person name="Glansdorff N."/>
            <person name="Goffeau A."/>
            <person name="Grivell L.A."/>
            <person name="de Haan M."/>
            <person name="Hein C."/>
            <person name="Herbert C.J."/>
            <person name="Hollenberg C.P."/>
            <person name="Holmstroem K."/>
            <person name="Jacq C."/>
            <person name="Jacquet M."/>
            <person name="Jauniaux J.-C."/>
            <person name="Jonniaux J.-L."/>
            <person name="Kallesoee T."/>
            <person name="Kiesau P."/>
            <person name="Kirchrath L."/>
            <person name="Koetter P."/>
            <person name="Korol S."/>
            <person name="Liebl S."/>
            <person name="Logghe M."/>
            <person name="Lohan A.J.E."/>
            <person name="Louis E.J."/>
            <person name="Li Z.Y."/>
            <person name="Maat M.J."/>
            <person name="Mallet L."/>
            <person name="Mannhaupt G."/>
            <person name="Messenguy F."/>
            <person name="Miosga T."/>
            <person name="Molemans F."/>
            <person name="Mueller S."/>
            <person name="Nasr F."/>
            <person name="Obermaier B."/>
            <person name="Perea J."/>
            <person name="Pierard A."/>
            <person name="Piravandi E."/>
            <person name="Pohl F.M."/>
            <person name="Pohl T.M."/>
            <person name="Potier S."/>
            <person name="Proft M."/>
            <person name="Purnelle B."/>
            <person name="Ramezani Rad M."/>
            <person name="Rieger M."/>
            <person name="Rose M."/>
            <person name="Schaaff-Gerstenschlaeger I."/>
            <person name="Scherens B."/>
            <person name="Schwarzlose C."/>
            <person name="Skala J."/>
            <person name="Slonimski P.P."/>
            <person name="Smits P.H.M."/>
            <person name="Souciet J.-L."/>
            <person name="Steensma H.Y."/>
            <person name="Stucka R."/>
            <person name="Urrestarazu L.A."/>
            <person name="van der Aart Q.J.M."/>
            <person name="Van Dyck L."/>
            <person name="Vassarotti A."/>
            <person name="Vetter I."/>
            <person name="Vierendeels F."/>
            <person name="Vissers S."/>
            <person name="Wagner G."/>
            <person name="de Wergifosse P."/>
            <person name="Wolfe K.H."/>
            <person name="Zagulski M."/>
            <person name="Zimmermann F.K."/>
            <person name="Mewes H.-W."/>
            <person name="Kleine K."/>
        </authorList>
    </citation>
    <scope>NUCLEOTIDE SEQUENCE [LARGE SCALE GENOMIC DNA]</scope>
    <source>
        <strain>ATCC 204508 / S288c</strain>
    </source>
</reference>
<reference key="3">
    <citation type="journal article" date="2014" name="G3 (Bethesda)">
        <title>The reference genome sequence of Saccharomyces cerevisiae: Then and now.</title>
        <authorList>
            <person name="Engel S.R."/>
            <person name="Dietrich F.S."/>
            <person name="Fisk D.G."/>
            <person name="Binkley G."/>
            <person name="Balakrishnan R."/>
            <person name="Costanzo M.C."/>
            <person name="Dwight S.S."/>
            <person name="Hitz B.C."/>
            <person name="Karra K."/>
            <person name="Nash R.S."/>
            <person name="Weng S."/>
            <person name="Wong E.D."/>
            <person name="Lloyd P."/>
            <person name="Skrzypek M.S."/>
            <person name="Miyasato S.R."/>
            <person name="Simison M."/>
            <person name="Cherry J.M."/>
        </authorList>
    </citation>
    <scope>GENOME REANNOTATION</scope>
    <source>
        <strain>ATCC 204508 / S288c</strain>
    </source>
</reference>
<reference key="4">
    <citation type="journal article" date="1997" name="J. Biol. Chem.">
        <title>The PPS1 gene of Saccharomyces cerevisiae codes for a dual specificity protein phosphatase with a role in the DNA synthesis phase of the cell cycle.</title>
        <authorList>
            <person name="Ernsting B.R."/>
            <person name="Dixon J.E."/>
        </authorList>
    </citation>
    <scope>FUNCTION</scope>
</reference>
<proteinExistence type="inferred from homology"/>
<accession>P38148</accession>
<accession>D6VQS2</accession>